<comment type="function">
    <text>Involved in the biosynthesis of lipid A, a phosphorylated glycolipid that anchors the lipopolysaccharide to the outer membrane of the cell.</text>
</comment>
<comment type="catalytic activity">
    <reaction evidence="1">
        <text>a (3R)-hydroxyacyl-[ACP] + UDP-N-acetyl-alpha-D-glucosamine = a UDP-3-O-[(3R)-3-hydroxyacyl]-N-acetyl-alpha-D-glucosamine + holo-[ACP]</text>
        <dbReference type="Rhea" id="RHEA:67812"/>
        <dbReference type="Rhea" id="RHEA-COMP:9685"/>
        <dbReference type="Rhea" id="RHEA-COMP:9945"/>
        <dbReference type="ChEBI" id="CHEBI:57705"/>
        <dbReference type="ChEBI" id="CHEBI:64479"/>
        <dbReference type="ChEBI" id="CHEBI:78827"/>
        <dbReference type="ChEBI" id="CHEBI:173225"/>
        <dbReference type="EC" id="2.3.1.129"/>
    </reaction>
</comment>
<comment type="pathway">
    <text evidence="1">Glycolipid biosynthesis; lipid IV(A) biosynthesis; lipid IV(A) from (3R)-3-hydroxytetradecanoyl-[acyl-carrier-protein] and UDP-N-acetyl-alpha-D-glucosamine: step 1/6.</text>
</comment>
<comment type="subunit">
    <text evidence="1">Homotrimer.</text>
</comment>
<comment type="subcellular location">
    <subcellularLocation>
        <location>Cytoplasm</location>
    </subcellularLocation>
</comment>
<comment type="similarity">
    <text evidence="1">Belongs to the transferase hexapeptide repeat family. LpxA subfamily.</text>
</comment>
<reference key="1">
    <citation type="journal article" date="1994" name="FEBS Lett.">
        <title>The novel hexapeptide motif found in the acyltransferases LpxA and LpxD of lipid A biosynthesis is conserved in various bacteria.</title>
        <authorList>
            <person name="Vuorio R."/>
            <person name="Haerkonen T."/>
            <person name="Tolvanen M."/>
            <person name="Vaara M."/>
        </authorList>
    </citation>
    <scope>NUCLEOTIDE SEQUENCE [GENOMIC DNA]</scope>
    <source>
        <strain>LT2 / SH5014</strain>
    </source>
</reference>
<reference key="2">
    <citation type="journal article" date="2001" name="Nature">
        <title>Complete genome sequence of Salmonella enterica serovar Typhimurium LT2.</title>
        <authorList>
            <person name="McClelland M."/>
            <person name="Sanderson K.E."/>
            <person name="Spieth J."/>
            <person name="Clifton S.W."/>
            <person name="Latreille P."/>
            <person name="Courtney L."/>
            <person name="Porwollik S."/>
            <person name="Ali J."/>
            <person name="Dante M."/>
            <person name="Du F."/>
            <person name="Hou S."/>
            <person name="Layman D."/>
            <person name="Leonard S."/>
            <person name="Nguyen C."/>
            <person name="Scott K."/>
            <person name="Holmes A."/>
            <person name="Grewal N."/>
            <person name="Mulvaney E."/>
            <person name="Ryan E."/>
            <person name="Sun H."/>
            <person name="Florea L."/>
            <person name="Miller W."/>
            <person name="Stoneking T."/>
            <person name="Nhan M."/>
            <person name="Waterston R."/>
            <person name="Wilson R.K."/>
        </authorList>
    </citation>
    <scope>NUCLEOTIDE SEQUENCE [LARGE SCALE GENOMIC DNA]</scope>
    <source>
        <strain>LT2 / SGSC1412 / ATCC 700720</strain>
    </source>
</reference>
<dbReference type="EC" id="2.3.1.129" evidence="1"/>
<dbReference type="EMBL" id="Z25462">
    <property type="protein sequence ID" value="CAA80950.1"/>
    <property type="molecule type" value="Genomic_DNA"/>
</dbReference>
<dbReference type="EMBL" id="AE006468">
    <property type="protein sequence ID" value="AAL19192.1"/>
    <property type="molecule type" value="Genomic_DNA"/>
</dbReference>
<dbReference type="PIR" id="S41751">
    <property type="entry name" value="S41751"/>
</dbReference>
<dbReference type="RefSeq" id="NP_459233.1">
    <property type="nucleotide sequence ID" value="NC_003197.2"/>
</dbReference>
<dbReference type="RefSeq" id="WP_000565950.1">
    <property type="nucleotide sequence ID" value="NC_003197.2"/>
</dbReference>
<dbReference type="SMR" id="P32200"/>
<dbReference type="STRING" id="99287.STM0228"/>
<dbReference type="PaxDb" id="99287-STM0228"/>
<dbReference type="GeneID" id="1251746"/>
<dbReference type="KEGG" id="stm:STM0228"/>
<dbReference type="PATRIC" id="fig|99287.12.peg.241"/>
<dbReference type="HOGENOM" id="CLU_061249_0_0_6"/>
<dbReference type="OMA" id="ECVTINR"/>
<dbReference type="PhylomeDB" id="P32200"/>
<dbReference type="BioCyc" id="SENT99287:STM0228-MONOMER"/>
<dbReference type="UniPathway" id="UPA00359">
    <property type="reaction ID" value="UER00477"/>
</dbReference>
<dbReference type="Proteomes" id="UP000001014">
    <property type="component" value="Chromosome"/>
</dbReference>
<dbReference type="GO" id="GO:0005737">
    <property type="term" value="C:cytoplasm"/>
    <property type="evidence" value="ECO:0007669"/>
    <property type="project" value="UniProtKB-SubCell"/>
</dbReference>
<dbReference type="GO" id="GO:0016020">
    <property type="term" value="C:membrane"/>
    <property type="evidence" value="ECO:0007669"/>
    <property type="project" value="GOC"/>
</dbReference>
<dbReference type="GO" id="GO:0008780">
    <property type="term" value="F:acyl-[acyl-carrier-protein]-UDP-N-acetylglucosamine O-acyltransferase activity"/>
    <property type="evidence" value="ECO:0007669"/>
    <property type="project" value="UniProtKB-UniRule"/>
</dbReference>
<dbReference type="GO" id="GO:0009245">
    <property type="term" value="P:lipid A biosynthetic process"/>
    <property type="evidence" value="ECO:0007669"/>
    <property type="project" value="UniProtKB-UniRule"/>
</dbReference>
<dbReference type="CDD" id="cd03351">
    <property type="entry name" value="LbH_UDP-GlcNAc_AT"/>
    <property type="match status" value="1"/>
</dbReference>
<dbReference type="FunFam" id="2.160.10.10:FF:000003">
    <property type="entry name" value="Acyl-[acyl-carrier-protein]--UDP-N-acetylglucosamine O-acyltransferase"/>
    <property type="match status" value="1"/>
</dbReference>
<dbReference type="Gene3D" id="2.160.10.10">
    <property type="entry name" value="Hexapeptide repeat proteins"/>
    <property type="match status" value="1"/>
</dbReference>
<dbReference type="Gene3D" id="1.20.1180.10">
    <property type="entry name" value="Udp N-acetylglucosamine O-acyltransferase, C-terminal domain"/>
    <property type="match status" value="1"/>
</dbReference>
<dbReference type="HAMAP" id="MF_00387">
    <property type="entry name" value="LpxA"/>
    <property type="match status" value="1"/>
</dbReference>
<dbReference type="InterPro" id="IPR029098">
    <property type="entry name" value="Acetyltransf_C"/>
</dbReference>
<dbReference type="InterPro" id="IPR037157">
    <property type="entry name" value="Acetyltransf_C_sf"/>
</dbReference>
<dbReference type="InterPro" id="IPR001451">
    <property type="entry name" value="Hexapep"/>
</dbReference>
<dbReference type="InterPro" id="IPR018357">
    <property type="entry name" value="Hexapep_transf_CS"/>
</dbReference>
<dbReference type="InterPro" id="IPR010137">
    <property type="entry name" value="Lipid_A_LpxA"/>
</dbReference>
<dbReference type="InterPro" id="IPR011004">
    <property type="entry name" value="Trimer_LpxA-like_sf"/>
</dbReference>
<dbReference type="NCBIfam" id="TIGR01852">
    <property type="entry name" value="lipid_A_lpxA"/>
    <property type="match status" value="1"/>
</dbReference>
<dbReference type="NCBIfam" id="NF003657">
    <property type="entry name" value="PRK05289.1"/>
    <property type="match status" value="1"/>
</dbReference>
<dbReference type="PANTHER" id="PTHR43480">
    <property type="entry name" value="ACYL-[ACYL-CARRIER-PROTEIN]--UDP-N-ACETYLGLUCOSAMINE O-ACYLTRANSFERASE"/>
    <property type="match status" value="1"/>
</dbReference>
<dbReference type="PANTHER" id="PTHR43480:SF1">
    <property type="entry name" value="ACYL-[ACYL-CARRIER-PROTEIN]--UDP-N-ACETYLGLUCOSAMINE O-ACYLTRANSFERASE, MITOCHONDRIAL-RELATED"/>
    <property type="match status" value="1"/>
</dbReference>
<dbReference type="Pfam" id="PF13720">
    <property type="entry name" value="Acetyltransf_11"/>
    <property type="match status" value="1"/>
</dbReference>
<dbReference type="Pfam" id="PF00132">
    <property type="entry name" value="Hexapep"/>
    <property type="match status" value="2"/>
</dbReference>
<dbReference type="PIRSF" id="PIRSF000456">
    <property type="entry name" value="UDP-GlcNAc_acltr"/>
    <property type="match status" value="1"/>
</dbReference>
<dbReference type="SUPFAM" id="SSF51161">
    <property type="entry name" value="Trimeric LpxA-like enzymes"/>
    <property type="match status" value="1"/>
</dbReference>
<dbReference type="PROSITE" id="PS00101">
    <property type="entry name" value="HEXAPEP_TRANSFERASES"/>
    <property type="match status" value="2"/>
</dbReference>
<feature type="chain" id="PRO_0000188068" description="Acyl-[acyl-carrier-protein]--UDP-N-acetylglucosamine O-acyltransferase">
    <location>
        <begin position="1"/>
        <end position="262"/>
    </location>
</feature>
<proteinExistence type="inferred from homology"/>
<organism>
    <name type="scientific">Salmonella typhimurium (strain LT2 / SGSC1412 / ATCC 700720)</name>
    <dbReference type="NCBI Taxonomy" id="99287"/>
    <lineage>
        <taxon>Bacteria</taxon>
        <taxon>Pseudomonadati</taxon>
        <taxon>Pseudomonadota</taxon>
        <taxon>Gammaproteobacteria</taxon>
        <taxon>Enterobacterales</taxon>
        <taxon>Enterobacteriaceae</taxon>
        <taxon>Salmonella</taxon>
    </lineage>
</organism>
<accession>P32200</accession>
<protein>
    <recommendedName>
        <fullName evidence="1">Acyl-[acyl-carrier-protein]--UDP-N-acetylglucosamine O-acyltransferase</fullName>
        <shortName evidence="1">UDP-N-acetylglucosamine acyltransferase</shortName>
        <ecNumber evidence="1">2.3.1.129</ecNumber>
    </recommendedName>
</protein>
<sequence>MIDKSAFIHPTAIVEDGAVIGANAHIGPFCIVGPQVEIGEGTVLKSHVVVNGQTKIGRDNEIYQFASIGEVNQDLKYAGEPTRVEIGDRNRIRESVTIHRGTVQGGGLTKVGSDNLLMINAHVAHDCTVGNRCILANNATLAGHVSVDDFAIIGGMTAVHQFCIIGAHVMVGGCSGVAQDVPPYVIAQGNHATPFGVNIEGLKRRGFSREGLVAIRNAYKLLYRSGKTLDEAKLEIAELAEKHPEVKAFTEFFERSTRGPIR</sequence>
<keyword id="KW-0012">Acyltransferase</keyword>
<keyword id="KW-0963">Cytoplasm</keyword>
<keyword id="KW-0441">Lipid A biosynthesis</keyword>
<keyword id="KW-0444">Lipid biosynthesis</keyword>
<keyword id="KW-0443">Lipid metabolism</keyword>
<keyword id="KW-1185">Reference proteome</keyword>
<keyword id="KW-0677">Repeat</keyword>
<keyword id="KW-0808">Transferase</keyword>
<name>LPXA_SALTY</name>
<gene>
    <name evidence="1" type="primary">lpxA</name>
    <name type="ordered locus">STM0228</name>
</gene>
<evidence type="ECO:0000255" key="1">
    <source>
        <dbReference type="HAMAP-Rule" id="MF_00387"/>
    </source>
</evidence>